<gene>
    <name type="ordered locus">Os06g0701100</name>
    <name type="ordered locus">LOC_Os06g48750</name>
    <name type="ORF">OsJ_22532</name>
    <name type="ORF">P0468G03.33</name>
    <name type="ORF">P0596H10.2</name>
</gene>
<comment type="function">
    <text evidence="1">ATP-dependent RNA helicase which is a subunit of the eIF4F complex involved in cap recognition and is required for mRNA binding to ribosome. In the current model of translation initiation, eIF4A unwinds RNA secondary structures in the 5'-UTR of mRNAs which is necessary to allow efficient binding of the small ribosomal subunit, and subsequent scanning for the initiator codon (By similarity).</text>
</comment>
<comment type="catalytic activity">
    <reaction>
        <text>ATP + H2O = ADP + phosphate + H(+)</text>
        <dbReference type="Rhea" id="RHEA:13065"/>
        <dbReference type="ChEBI" id="CHEBI:15377"/>
        <dbReference type="ChEBI" id="CHEBI:15378"/>
        <dbReference type="ChEBI" id="CHEBI:30616"/>
        <dbReference type="ChEBI" id="CHEBI:43474"/>
        <dbReference type="ChEBI" id="CHEBI:456216"/>
        <dbReference type="EC" id="3.6.4.13"/>
    </reaction>
</comment>
<comment type="subunit">
    <text evidence="1">eIF4F is a multi-subunit complex, the composition of which varies with external and internal environmental conditions. It is composed of at least EIF4A, EIF4E and EIF4G (By similarity).</text>
</comment>
<comment type="similarity">
    <text evidence="4">Belongs to the DEAD box helicase family. eIF4A subfamily.</text>
</comment>
<name>IF4A1_ORYSJ</name>
<reference key="1">
    <citation type="journal article" date="1993" name="Biochim. Biophys. Acta">
        <title>Isolation and characterization of a rice cDNA which encodes the eukaryotic initiation factor 4A.</title>
        <authorList>
            <person name="Nishi R."/>
            <person name="Kidou S."/>
            <person name="Uchimiya H."/>
            <person name="Kato A."/>
        </authorList>
    </citation>
    <scope>NUCLEOTIDE SEQUENCE [MRNA]</scope>
    <source>
        <strain>cv. Yamahoushi</strain>
    </source>
</reference>
<reference key="2">
    <citation type="journal article" date="2001" name="DNA Seq.">
        <title>Identification and characterization of two genes encoding the eukaryotic initiation factor 4A in rice.</title>
        <authorList>
            <person name="Kato A."/>
            <person name="Fujita S."/>
            <person name="Komeda Y."/>
        </authorList>
    </citation>
    <scope>NUCLEOTIDE SEQUENCE [GENOMIC DNA]</scope>
</reference>
<reference key="3">
    <citation type="journal article" date="2005" name="Nature">
        <title>The map-based sequence of the rice genome.</title>
        <authorList>
            <consortium name="International rice genome sequencing project (IRGSP)"/>
        </authorList>
    </citation>
    <scope>NUCLEOTIDE SEQUENCE [LARGE SCALE GENOMIC DNA]</scope>
    <source>
        <strain>cv. Nipponbare</strain>
    </source>
</reference>
<reference key="4">
    <citation type="journal article" date="2008" name="Nucleic Acids Res.">
        <title>The rice annotation project database (RAP-DB): 2008 update.</title>
        <authorList>
            <consortium name="The rice annotation project (RAP)"/>
        </authorList>
    </citation>
    <scope>GENOME REANNOTATION</scope>
    <source>
        <strain>cv. Nipponbare</strain>
    </source>
</reference>
<reference key="5">
    <citation type="journal article" date="2013" name="Rice">
        <title>Improvement of the Oryza sativa Nipponbare reference genome using next generation sequence and optical map data.</title>
        <authorList>
            <person name="Kawahara Y."/>
            <person name="de la Bastide M."/>
            <person name="Hamilton J.P."/>
            <person name="Kanamori H."/>
            <person name="McCombie W.R."/>
            <person name="Ouyang S."/>
            <person name="Schwartz D.C."/>
            <person name="Tanaka T."/>
            <person name="Wu J."/>
            <person name="Zhou S."/>
            <person name="Childs K.L."/>
            <person name="Davidson R.M."/>
            <person name="Lin H."/>
            <person name="Quesada-Ocampo L."/>
            <person name="Vaillancourt B."/>
            <person name="Sakai H."/>
            <person name="Lee S.S."/>
            <person name="Kim J."/>
            <person name="Numa H."/>
            <person name="Itoh T."/>
            <person name="Buell C.R."/>
            <person name="Matsumoto T."/>
        </authorList>
    </citation>
    <scope>GENOME REANNOTATION</scope>
    <source>
        <strain>cv. Nipponbare</strain>
    </source>
</reference>
<reference key="6">
    <citation type="journal article" date="2005" name="PLoS Biol.">
        <title>The genomes of Oryza sativa: a history of duplications.</title>
        <authorList>
            <person name="Yu J."/>
            <person name="Wang J."/>
            <person name="Lin W."/>
            <person name="Li S."/>
            <person name="Li H."/>
            <person name="Zhou J."/>
            <person name="Ni P."/>
            <person name="Dong W."/>
            <person name="Hu S."/>
            <person name="Zeng C."/>
            <person name="Zhang J."/>
            <person name="Zhang Y."/>
            <person name="Li R."/>
            <person name="Xu Z."/>
            <person name="Li S."/>
            <person name="Li X."/>
            <person name="Zheng H."/>
            <person name="Cong L."/>
            <person name="Lin L."/>
            <person name="Yin J."/>
            <person name="Geng J."/>
            <person name="Li G."/>
            <person name="Shi J."/>
            <person name="Liu J."/>
            <person name="Lv H."/>
            <person name="Li J."/>
            <person name="Wang J."/>
            <person name="Deng Y."/>
            <person name="Ran L."/>
            <person name="Shi X."/>
            <person name="Wang X."/>
            <person name="Wu Q."/>
            <person name="Li C."/>
            <person name="Ren X."/>
            <person name="Wang J."/>
            <person name="Wang X."/>
            <person name="Li D."/>
            <person name="Liu D."/>
            <person name="Zhang X."/>
            <person name="Ji Z."/>
            <person name="Zhao W."/>
            <person name="Sun Y."/>
            <person name="Zhang Z."/>
            <person name="Bao J."/>
            <person name="Han Y."/>
            <person name="Dong L."/>
            <person name="Ji J."/>
            <person name="Chen P."/>
            <person name="Wu S."/>
            <person name="Liu J."/>
            <person name="Xiao Y."/>
            <person name="Bu D."/>
            <person name="Tan J."/>
            <person name="Yang L."/>
            <person name="Ye C."/>
            <person name="Zhang J."/>
            <person name="Xu J."/>
            <person name="Zhou Y."/>
            <person name="Yu Y."/>
            <person name="Zhang B."/>
            <person name="Zhuang S."/>
            <person name="Wei H."/>
            <person name="Liu B."/>
            <person name="Lei M."/>
            <person name="Yu H."/>
            <person name="Li Y."/>
            <person name="Xu H."/>
            <person name="Wei S."/>
            <person name="He X."/>
            <person name="Fang L."/>
            <person name="Zhang Z."/>
            <person name="Zhang Y."/>
            <person name="Huang X."/>
            <person name="Su Z."/>
            <person name="Tong W."/>
            <person name="Li J."/>
            <person name="Tong Z."/>
            <person name="Li S."/>
            <person name="Ye J."/>
            <person name="Wang L."/>
            <person name="Fang L."/>
            <person name="Lei T."/>
            <person name="Chen C.-S."/>
            <person name="Chen H.-C."/>
            <person name="Xu Z."/>
            <person name="Li H."/>
            <person name="Huang H."/>
            <person name="Zhang F."/>
            <person name="Xu H."/>
            <person name="Li N."/>
            <person name="Zhao C."/>
            <person name="Li S."/>
            <person name="Dong L."/>
            <person name="Huang Y."/>
            <person name="Li L."/>
            <person name="Xi Y."/>
            <person name="Qi Q."/>
            <person name="Li W."/>
            <person name="Zhang B."/>
            <person name="Hu W."/>
            <person name="Zhang Y."/>
            <person name="Tian X."/>
            <person name="Jiao Y."/>
            <person name="Liang X."/>
            <person name="Jin J."/>
            <person name="Gao L."/>
            <person name="Zheng W."/>
            <person name="Hao B."/>
            <person name="Liu S.-M."/>
            <person name="Wang W."/>
            <person name="Yuan L."/>
            <person name="Cao M."/>
            <person name="McDermott J."/>
            <person name="Samudrala R."/>
            <person name="Wang J."/>
            <person name="Wong G.K.-S."/>
            <person name="Yang H."/>
        </authorList>
    </citation>
    <scope>NUCLEOTIDE SEQUENCE [LARGE SCALE GENOMIC DNA]</scope>
    <source>
        <strain>cv. Nipponbare</strain>
    </source>
</reference>
<reference key="7">
    <citation type="journal article" date="2003" name="Science">
        <title>Collection, mapping, and annotation of over 28,000 cDNA clones from japonica rice.</title>
        <authorList>
            <consortium name="The rice full-length cDNA consortium"/>
        </authorList>
    </citation>
    <scope>NUCLEOTIDE SEQUENCE [LARGE SCALE MRNA]</scope>
    <source>
        <strain>cv. Nipponbare</strain>
    </source>
</reference>
<organism>
    <name type="scientific">Oryza sativa subsp. japonica</name>
    <name type="common">Rice</name>
    <dbReference type="NCBI Taxonomy" id="39947"/>
    <lineage>
        <taxon>Eukaryota</taxon>
        <taxon>Viridiplantae</taxon>
        <taxon>Streptophyta</taxon>
        <taxon>Embryophyta</taxon>
        <taxon>Tracheophyta</taxon>
        <taxon>Spermatophyta</taxon>
        <taxon>Magnoliopsida</taxon>
        <taxon>Liliopsida</taxon>
        <taxon>Poales</taxon>
        <taxon>Poaceae</taxon>
        <taxon>BOP clade</taxon>
        <taxon>Oryzoideae</taxon>
        <taxon>Oryzeae</taxon>
        <taxon>Oryzinae</taxon>
        <taxon>Oryza</taxon>
        <taxon>Oryza sativa</taxon>
    </lineage>
</organism>
<feature type="chain" id="PRO_0000054963" description="Eukaryotic initiation factor 4A-1">
    <location>
        <begin position="1"/>
        <end position="414"/>
    </location>
</feature>
<feature type="domain" description="Helicase ATP-binding" evidence="2">
    <location>
        <begin position="72"/>
        <end position="242"/>
    </location>
</feature>
<feature type="domain" description="Helicase C-terminal" evidence="3">
    <location>
        <begin position="253"/>
        <end position="414"/>
    </location>
</feature>
<feature type="short sequence motif" description="Q motif">
    <location>
        <begin position="41"/>
        <end position="69"/>
    </location>
</feature>
<feature type="short sequence motif" description="DEAD box">
    <location>
        <begin position="190"/>
        <end position="193"/>
    </location>
</feature>
<feature type="binding site" evidence="2">
    <location>
        <begin position="85"/>
        <end position="92"/>
    </location>
    <ligand>
        <name>ATP</name>
        <dbReference type="ChEBI" id="CHEBI:30616"/>
    </ligand>
</feature>
<feature type="sequence conflict" description="In Ref. 1; BAA02152 and 2; BAB21260." evidence="4" ref="1 2">
    <location>
        <position position="291"/>
    </location>
</feature>
<protein>
    <recommendedName>
        <fullName>Eukaryotic initiation factor 4A-1</fullName>
        <shortName>eIF-4A-1</shortName>
        <ecNumber>3.6.4.13</ecNumber>
    </recommendedName>
    <alternativeName>
        <fullName>ATP-dependent RNA helicase eIF4A-1</fullName>
    </alternativeName>
    <alternativeName>
        <fullName>DEAD-box ATP-dependent RNA helicase 4</fullName>
    </alternativeName>
</protein>
<evidence type="ECO:0000250" key="1"/>
<evidence type="ECO:0000255" key="2">
    <source>
        <dbReference type="PROSITE-ProRule" id="PRU00541"/>
    </source>
</evidence>
<evidence type="ECO:0000255" key="3">
    <source>
        <dbReference type="PROSITE-ProRule" id="PRU00542"/>
    </source>
</evidence>
<evidence type="ECO:0000305" key="4"/>
<keyword id="KW-0067">ATP-binding</keyword>
<keyword id="KW-0347">Helicase</keyword>
<keyword id="KW-0378">Hydrolase</keyword>
<keyword id="KW-0396">Initiation factor</keyword>
<keyword id="KW-0547">Nucleotide-binding</keyword>
<keyword id="KW-0648">Protein biosynthesis</keyword>
<keyword id="KW-1185">Reference proteome</keyword>
<keyword id="KW-0694">RNA-binding</keyword>
<dbReference type="EC" id="3.6.4.13"/>
<dbReference type="EMBL" id="D12627">
    <property type="protein sequence ID" value="BAA02152.1"/>
    <property type="molecule type" value="mRNA"/>
</dbReference>
<dbReference type="EMBL" id="AB046416">
    <property type="protein sequence ID" value="BAB21260.1"/>
    <property type="molecule type" value="Genomic_DNA"/>
</dbReference>
<dbReference type="EMBL" id="AP003726">
    <property type="protein sequence ID" value="BAD53769.1"/>
    <property type="molecule type" value="Genomic_DNA"/>
</dbReference>
<dbReference type="EMBL" id="AP004278">
    <property type="protein sequence ID" value="BAD54014.1"/>
    <property type="molecule type" value="Genomic_DNA"/>
</dbReference>
<dbReference type="EMBL" id="AP008212">
    <property type="protein sequence ID" value="BAF20395.1"/>
    <property type="molecule type" value="Genomic_DNA"/>
</dbReference>
<dbReference type="EMBL" id="AP014962">
    <property type="protein sequence ID" value="BAS99344.1"/>
    <property type="molecule type" value="Genomic_DNA"/>
</dbReference>
<dbReference type="EMBL" id="CM000143">
    <property type="protein sequence ID" value="EAZ38180.1"/>
    <property type="molecule type" value="Genomic_DNA"/>
</dbReference>
<dbReference type="EMBL" id="AK099927">
    <property type="protein sequence ID" value="BAG94357.1"/>
    <property type="molecule type" value="mRNA"/>
</dbReference>
<dbReference type="EMBL" id="AK105454">
    <property type="protein sequence ID" value="BAG97257.1"/>
    <property type="molecule type" value="mRNA"/>
</dbReference>
<dbReference type="EMBL" id="AK119234">
    <property type="protein sequence ID" value="BAG99594.1"/>
    <property type="molecule type" value="mRNA"/>
</dbReference>
<dbReference type="PIR" id="S38358">
    <property type="entry name" value="S38358"/>
</dbReference>
<dbReference type="RefSeq" id="XP_015643172.1">
    <property type="nucleotide sequence ID" value="XM_015787686.1"/>
</dbReference>
<dbReference type="SMR" id="P35683"/>
<dbReference type="FunCoup" id="P35683">
    <property type="interactions" value="2862"/>
</dbReference>
<dbReference type="STRING" id="39947.P35683"/>
<dbReference type="PaxDb" id="39947-P35683"/>
<dbReference type="EnsemblPlants" id="Os06t0701100-02">
    <property type="protein sequence ID" value="Os06t0701100-02"/>
    <property type="gene ID" value="Os06g0701100"/>
</dbReference>
<dbReference type="Gramene" id="Os06t0701100-02">
    <property type="protein sequence ID" value="Os06t0701100-02"/>
    <property type="gene ID" value="Os06g0701100"/>
</dbReference>
<dbReference type="KEGG" id="dosa:Os06g0701100"/>
<dbReference type="eggNOG" id="KOG0327">
    <property type="taxonomic scope" value="Eukaryota"/>
</dbReference>
<dbReference type="InParanoid" id="P35683"/>
<dbReference type="OMA" id="FGCQALV"/>
<dbReference type="OrthoDB" id="723973at2759"/>
<dbReference type="Proteomes" id="UP000000763">
    <property type="component" value="Chromosome 6"/>
</dbReference>
<dbReference type="Proteomes" id="UP000007752">
    <property type="component" value="Chromosome 6"/>
</dbReference>
<dbReference type="Proteomes" id="UP000059680">
    <property type="component" value="Chromosome 6"/>
</dbReference>
<dbReference type="ExpressionAtlas" id="P35683">
    <property type="expression patterns" value="baseline and differential"/>
</dbReference>
<dbReference type="GO" id="GO:0010494">
    <property type="term" value="C:cytoplasmic stress granule"/>
    <property type="evidence" value="ECO:0000318"/>
    <property type="project" value="GO_Central"/>
</dbReference>
<dbReference type="GO" id="GO:0005524">
    <property type="term" value="F:ATP binding"/>
    <property type="evidence" value="ECO:0007669"/>
    <property type="project" value="UniProtKB-KW"/>
</dbReference>
<dbReference type="GO" id="GO:0016887">
    <property type="term" value="F:ATP hydrolysis activity"/>
    <property type="evidence" value="ECO:0007669"/>
    <property type="project" value="RHEA"/>
</dbReference>
<dbReference type="GO" id="GO:0003723">
    <property type="term" value="F:RNA binding"/>
    <property type="evidence" value="ECO:0007669"/>
    <property type="project" value="UniProtKB-KW"/>
</dbReference>
<dbReference type="GO" id="GO:0003724">
    <property type="term" value="F:RNA helicase activity"/>
    <property type="evidence" value="ECO:0007669"/>
    <property type="project" value="UniProtKB-EC"/>
</dbReference>
<dbReference type="GO" id="GO:0003743">
    <property type="term" value="F:translation initiation factor activity"/>
    <property type="evidence" value="ECO:0000318"/>
    <property type="project" value="GO_Central"/>
</dbReference>
<dbReference type="GO" id="GO:0002183">
    <property type="term" value="P:cytoplasmic translational initiation"/>
    <property type="evidence" value="ECO:0000318"/>
    <property type="project" value="GO_Central"/>
</dbReference>
<dbReference type="CDD" id="cd17939">
    <property type="entry name" value="DEADc_EIF4A"/>
    <property type="match status" value="1"/>
</dbReference>
<dbReference type="CDD" id="cd18787">
    <property type="entry name" value="SF2_C_DEAD"/>
    <property type="match status" value="1"/>
</dbReference>
<dbReference type="FunFam" id="3.40.50.300:FF:000089">
    <property type="entry name" value="Eukaryotic initiation factor 4A-II"/>
    <property type="match status" value="1"/>
</dbReference>
<dbReference type="FunFam" id="3.40.50.300:FF:000031">
    <property type="entry name" value="Eukaryotic initiation factor 4A-III"/>
    <property type="match status" value="1"/>
</dbReference>
<dbReference type="Gene3D" id="3.40.50.300">
    <property type="entry name" value="P-loop containing nucleotide triphosphate hydrolases"/>
    <property type="match status" value="2"/>
</dbReference>
<dbReference type="InterPro" id="IPR011545">
    <property type="entry name" value="DEAD/DEAH_box_helicase_dom"/>
</dbReference>
<dbReference type="InterPro" id="IPR014001">
    <property type="entry name" value="Helicase_ATP-bd"/>
</dbReference>
<dbReference type="InterPro" id="IPR001650">
    <property type="entry name" value="Helicase_C-like"/>
</dbReference>
<dbReference type="InterPro" id="IPR027417">
    <property type="entry name" value="P-loop_NTPase"/>
</dbReference>
<dbReference type="InterPro" id="IPR000629">
    <property type="entry name" value="RNA-helicase_DEAD-box_CS"/>
</dbReference>
<dbReference type="InterPro" id="IPR014014">
    <property type="entry name" value="RNA_helicase_DEAD_Q_motif"/>
</dbReference>
<dbReference type="PANTHER" id="PTHR47958">
    <property type="entry name" value="ATP-DEPENDENT RNA HELICASE DBP3"/>
    <property type="match status" value="1"/>
</dbReference>
<dbReference type="Pfam" id="PF00270">
    <property type="entry name" value="DEAD"/>
    <property type="match status" value="1"/>
</dbReference>
<dbReference type="Pfam" id="PF00271">
    <property type="entry name" value="Helicase_C"/>
    <property type="match status" value="1"/>
</dbReference>
<dbReference type="SMART" id="SM00487">
    <property type="entry name" value="DEXDc"/>
    <property type="match status" value="1"/>
</dbReference>
<dbReference type="SMART" id="SM00490">
    <property type="entry name" value="HELICc"/>
    <property type="match status" value="1"/>
</dbReference>
<dbReference type="SUPFAM" id="SSF52540">
    <property type="entry name" value="P-loop containing nucleoside triphosphate hydrolases"/>
    <property type="match status" value="1"/>
</dbReference>
<dbReference type="PROSITE" id="PS00039">
    <property type="entry name" value="DEAD_ATP_HELICASE"/>
    <property type="match status" value="1"/>
</dbReference>
<dbReference type="PROSITE" id="PS51192">
    <property type="entry name" value="HELICASE_ATP_BIND_1"/>
    <property type="match status" value="1"/>
</dbReference>
<dbReference type="PROSITE" id="PS51194">
    <property type="entry name" value="HELICASE_CTER"/>
    <property type="match status" value="1"/>
</dbReference>
<dbReference type="PROSITE" id="PS51195">
    <property type="entry name" value="Q_MOTIF"/>
    <property type="match status" value="1"/>
</dbReference>
<proteinExistence type="evidence at transcript level"/>
<accession>P35683</accession>
<accession>B7EPR0</accession>
<accession>Q0D9S8</accession>
<accession>Q54AC9</accession>
<accession>Q5Z847</accession>
<sequence length="414" mass="47088">MAGMAPEGSQFDAKHYDSKMQELLNQGETEEFFTSYDEVHESFDDMGLQENLLRGIYAYGFEKPSAIQQRGIVPFCKGLDVIQQAQSGTGKTATFCSGILQQLDYAVVECQALVLAPTRELAQQIEKVMRALGDYLGVKVHACVGGTSVREDQRILASGVHVVVGTPGRVFDMLRRQSLRPDYIKMFVLDEADEMLSRGFKDQIYDIFQLLPSKIQVGVFSATMPPEALEITRKFMNKPVRILVKRDELTLEGIKQFYVNVEKEEWKLDTLCDLYETLAITQSVIFVNTRRKVDWLTDKMRGRDHTVSATHGDMDQNTRDIIMREFRSGSSRVLITTDLLARGIDVQQVSLVINYDLPTQPENYLHRIGRSGRFGRKGVAINFVTRDDERMLFDIQRFYNVVIEELPANVADLL</sequence>